<dbReference type="EMBL" id="FM211192">
    <property type="protein sequence ID" value="CAR70575.1"/>
    <property type="molecule type" value="Genomic_DNA"/>
</dbReference>
<dbReference type="SMR" id="B8ZUI1"/>
<dbReference type="KEGG" id="mlb:MLBr00482"/>
<dbReference type="HOGENOM" id="CLU_087936_2_1_11"/>
<dbReference type="Proteomes" id="UP000006900">
    <property type="component" value="Chromosome"/>
</dbReference>
<dbReference type="GO" id="GO:0005737">
    <property type="term" value="C:cytoplasm"/>
    <property type="evidence" value="ECO:0007669"/>
    <property type="project" value="UniProtKB-SubCell"/>
</dbReference>
<dbReference type="GO" id="GO:0009379">
    <property type="term" value="C:Holliday junction helicase complex"/>
    <property type="evidence" value="ECO:0007669"/>
    <property type="project" value="InterPro"/>
</dbReference>
<dbReference type="GO" id="GO:0048476">
    <property type="term" value="C:Holliday junction resolvase complex"/>
    <property type="evidence" value="ECO:0007669"/>
    <property type="project" value="UniProtKB-UniRule"/>
</dbReference>
<dbReference type="GO" id="GO:0005524">
    <property type="term" value="F:ATP binding"/>
    <property type="evidence" value="ECO:0007669"/>
    <property type="project" value="InterPro"/>
</dbReference>
<dbReference type="GO" id="GO:0000400">
    <property type="term" value="F:four-way junction DNA binding"/>
    <property type="evidence" value="ECO:0007669"/>
    <property type="project" value="UniProtKB-UniRule"/>
</dbReference>
<dbReference type="GO" id="GO:0009378">
    <property type="term" value="F:four-way junction helicase activity"/>
    <property type="evidence" value="ECO:0007669"/>
    <property type="project" value="InterPro"/>
</dbReference>
<dbReference type="GO" id="GO:0006310">
    <property type="term" value="P:DNA recombination"/>
    <property type="evidence" value="ECO:0007669"/>
    <property type="project" value="UniProtKB-UniRule"/>
</dbReference>
<dbReference type="GO" id="GO:0006281">
    <property type="term" value="P:DNA repair"/>
    <property type="evidence" value="ECO:0007669"/>
    <property type="project" value="UniProtKB-UniRule"/>
</dbReference>
<dbReference type="CDD" id="cd14332">
    <property type="entry name" value="UBA_RuvA_C"/>
    <property type="match status" value="1"/>
</dbReference>
<dbReference type="FunFam" id="2.40.50.140:FF:000083">
    <property type="entry name" value="Holliday junction ATP-dependent DNA helicase RuvA"/>
    <property type="match status" value="1"/>
</dbReference>
<dbReference type="Gene3D" id="1.10.150.20">
    <property type="entry name" value="5' to 3' exonuclease, C-terminal subdomain"/>
    <property type="match status" value="1"/>
</dbReference>
<dbReference type="Gene3D" id="1.10.8.10">
    <property type="entry name" value="DNA helicase RuvA subunit, C-terminal domain"/>
    <property type="match status" value="1"/>
</dbReference>
<dbReference type="Gene3D" id="2.40.50.140">
    <property type="entry name" value="Nucleic acid-binding proteins"/>
    <property type="match status" value="1"/>
</dbReference>
<dbReference type="HAMAP" id="MF_00031">
    <property type="entry name" value="DNA_HJ_migration_RuvA"/>
    <property type="match status" value="1"/>
</dbReference>
<dbReference type="InterPro" id="IPR013849">
    <property type="entry name" value="DNA_helicase_Holl-junc_RuvA_I"/>
</dbReference>
<dbReference type="InterPro" id="IPR003583">
    <property type="entry name" value="Hlx-hairpin-Hlx_DNA-bd_motif"/>
</dbReference>
<dbReference type="InterPro" id="IPR012340">
    <property type="entry name" value="NA-bd_OB-fold"/>
</dbReference>
<dbReference type="InterPro" id="IPR000085">
    <property type="entry name" value="RuvA"/>
</dbReference>
<dbReference type="InterPro" id="IPR010994">
    <property type="entry name" value="RuvA_2-like"/>
</dbReference>
<dbReference type="InterPro" id="IPR011114">
    <property type="entry name" value="RuvA_C"/>
</dbReference>
<dbReference type="InterPro" id="IPR036267">
    <property type="entry name" value="RuvA_C_sf"/>
</dbReference>
<dbReference type="NCBIfam" id="TIGR00084">
    <property type="entry name" value="ruvA"/>
    <property type="match status" value="1"/>
</dbReference>
<dbReference type="Pfam" id="PF14520">
    <property type="entry name" value="HHH_5"/>
    <property type="match status" value="1"/>
</dbReference>
<dbReference type="Pfam" id="PF07499">
    <property type="entry name" value="RuvA_C"/>
    <property type="match status" value="1"/>
</dbReference>
<dbReference type="Pfam" id="PF01330">
    <property type="entry name" value="RuvA_N"/>
    <property type="match status" value="1"/>
</dbReference>
<dbReference type="SMART" id="SM00278">
    <property type="entry name" value="HhH1"/>
    <property type="match status" value="2"/>
</dbReference>
<dbReference type="SUPFAM" id="SSF46929">
    <property type="entry name" value="DNA helicase RuvA subunit, C-terminal domain"/>
    <property type="match status" value="1"/>
</dbReference>
<dbReference type="SUPFAM" id="SSF50249">
    <property type="entry name" value="Nucleic acid-binding proteins"/>
    <property type="match status" value="1"/>
</dbReference>
<dbReference type="SUPFAM" id="SSF47781">
    <property type="entry name" value="RuvA domain 2-like"/>
    <property type="match status" value="1"/>
</dbReference>
<accession>B8ZUI1</accession>
<gene>
    <name evidence="1" type="primary">ruvA</name>
    <name type="ordered locus">MLBr00482</name>
</gene>
<keyword id="KW-0963">Cytoplasm</keyword>
<keyword id="KW-0227">DNA damage</keyword>
<keyword id="KW-0233">DNA recombination</keyword>
<keyword id="KW-0234">DNA repair</keyword>
<keyword id="KW-0238">DNA-binding</keyword>
<sequence length="203" mass="20751">MIFSVRGEVLEVALDHAVIEAAGIGYRVNATPSALATLRQGSQARLVTAMVVREDSMTLYGFSDAENRDLFLALLSVSGVGPRLAMATLAVHDAAALRQALADSDVASLTRVPGIGKRGAERIVLELRDKVGPVGASGLTVGTAADGNAVRGSVVEALVGLGFAAKQAEEATDQVLDGELGKDGAVATSSALRAALSLLGKTR</sequence>
<proteinExistence type="inferred from homology"/>
<reference key="1">
    <citation type="journal article" date="2009" name="Nat. Genet.">
        <title>Comparative genomic and phylogeographic analysis of Mycobacterium leprae.</title>
        <authorList>
            <person name="Monot M."/>
            <person name="Honore N."/>
            <person name="Garnier T."/>
            <person name="Zidane N."/>
            <person name="Sherafi D."/>
            <person name="Paniz-Mondolfi A."/>
            <person name="Matsuoka M."/>
            <person name="Taylor G.M."/>
            <person name="Donoghue H.D."/>
            <person name="Bouwman A."/>
            <person name="Mays S."/>
            <person name="Watson C."/>
            <person name="Lockwood D."/>
            <person name="Khamispour A."/>
            <person name="Dowlati Y."/>
            <person name="Jianping S."/>
            <person name="Rea T.H."/>
            <person name="Vera-Cabrera L."/>
            <person name="Stefani M.M."/>
            <person name="Banu S."/>
            <person name="Macdonald M."/>
            <person name="Sapkota B.R."/>
            <person name="Spencer J.S."/>
            <person name="Thomas J."/>
            <person name="Harshman K."/>
            <person name="Singh P."/>
            <person name="Busso P."/>
            <person name="Gattiker A."/>
            <person name="Rougemont J."/>
            <person name="Brennan P.J."/>
            <person name="Cole S.T."/>
        </authorList>
    </citation>
    <scope>NUCLEOTIDE SEQUENCE [LARGE SCALE GENOMIC DNA]</scope>
    <source>
        <strain>Br4923</strain>
    </source>
</reference>
<organism>
    <name type="scientific">Mycobacterium leprae (strain Br4923)</name>
    <dbReference type="NCBI Taxonomy" id="561304"/>
    <lineage>
        <taxon>Bacteria</taxon>
        <taxon>Bacillati</taxon>
        <taxon>Actinomycetota</taxon>
        <taxon>Actinomycetes</taxon>
        <taxon>Mycobacteriales</taxon>
        <taxon>Mycobacteriaceae</taxon>
        <taxon>Mycobacterium</taxon>
    </lineage>
</organism>
<feature type="chain" id="PRO_1000195160" description="Holliday junction branch migration complex subunit RuvA">
    <location>
        <begin position="1"/>
        <end position="203"/>
    </location>
</feature>
<feature type="region of interest" description="Domain I" evidence="1">
    <location>
        <begin position="1"/>
        <end position="63"/>
    </location>
</feature>
<feature type="region of interest" description="Domain II" evidence="1">
    <location>
        <begin position="64"/>
        <end position="141"/>
    </location>
</feature>
<feature type="region of interest" description="Flexible linker" evidence="1">
    <location>
        <begin position="141"/>
        <end position="145"/>
    </location>
</feature>
<feature type="region of interest" description="Domain III" evidence="1">
    <location>
        <begin position="146"/>
        <end position="203"/>
    </location>
</feature>
<comment type="function">
    <text evidence="1">The RuvA-RuvB-RuvC complex processes Holliday junction (HJ) DNA during genetic recombination and DNA repair, while the RuvA-RuvB complex plays an important role in the rescue of blocked DNA replication forks via replication fork reversal (RFR). RuvA specifically binds to HJ cruciform DNA, conferring on it an open structure. The RuvB hexamer acts as an ATP-dependent pump, pulling dsDNA into and through the RuvAB complex. HJ branch migration allows RuvC to scan DNA until it finds its consensus sequence, where it cleaves and resolves the cruciform DNA.</text>
</comment>
<comment type="subunit">
    <text evidence="1">Homotetramer. Forms an RuvA(8)-RuvB(12)-Holliday junction (HJ) complex. HJ DNA is sandwiched between 2 RuvA tetramers; dsDNA enters through RuvA and exits via RuvB. An RuvB hexamer assembles on each DNA strand where it exits the tetramer. Each RuvB hexamer is contacted by two RuvA subunits (via domain III) on 2 adjacent RuvB subunits; this complex drives branch migration. In the full resolvosome a probable DNA-RuvA(4)-RuvB(12)-RuvC(2) complex forms which resolves the HJ.</text>
</comment>
<comment type="subcellular location">
    <subcellularLocation>
        <location evidence="1">Cytoplasm</location>
    </subcellularLocation>
</comment>
<comment type="domain">
    <text evidence="1">Has three domains with a flexible linker between the domains II and III and assumes an 'L' shape. Domain III is highly mobile and contacts RuvB.</text>
</comment>
<comment type="similarity">
    <text evidence="1">Belongs to the RuvA family.</text>
</comment>
<name>RUVA_MYCLB</name>
<evidence type="ECO:0000255" key="1">
    <source>
        <dbReference type="HAMAP-Rule" id="MF_00031"/>
    </source>
</evidence>
<protein>
    <recommendedName>
        <fullName evidence="1">Holliday junction branch migration complex subunit RuvA</fullName>
    </recommendedName>
</protein>